<sequence>MKLSRRDFMKANAAVAAAAAAGLTIPTVVQAAAGSADSIKWDKAPCRFCGTGCGVLVGTQNGRIVASQGDPEAAVNRGLSCIKGYFLPKIMYGKDRLNQPLLRMKDGQYHKEGEFTPVSWQQAFDIMAEKFKQALKEKGPEAVGMFGSGQWTVWEGYAAAKLLKAGLRSNNLDPNARHCMASAVVGFMRTFGMDEPMGCYDDIEQADAFVLWGSNMAEMHPILWSRITDRRLSNEKVNVSVLSTFEHRSFELADNGMVFTPQTDLAIMNYIANYIIQNNAVDQDFLNRHVNFRRGATDIGYGLRPTDPLEKAAKNPGSDASDPMSFEEYKAFVADYTLEKTAKMSGVPEDQLEALAKLYADPNIKVVSYWTMGFNQHTRGVWANNLCYNLHLLTGKISKPGCGPFSLTGQPSACGTAREVGTFAHRLPADMVVTNEKHRQTAEQKWQLPAGTIPAKVGLHAVAQDRALKDGTLNAYWVMCNNNMQAGPNINEDRMPGWRDARNFVVVSDPYPTVSALAADLILPTAMWVEKEGAYGNAERRTQFWRQQVKAPGEAKSDLWQLVEFSKRFTVEEVWPAELLAQKPEYRGKTLYDVLFANGEVNKYPLTEIPADQLNDEARDFGFYLQKGLFEEYAGFGRGHGHDLAPFDSYHQARGLRWPVVEGKETLWRYREGTDPYVKAGEEVRFYGKPDGKAVIFALPFEPAAESPDKEYDLWLSTGRVLEHWHTGSMTRRVPELHRAFPQAVVFIHPLDAKSRNLRRGEKVRVLSRRGELISTVETRGRNRPPRGLVYMPFFDAAQLVNNLTLDATDPLSKEVDFKKCAVKLEKV</sequence>
<protein>
    <recommendedName>
        <fullName evidence="1">Periplasmic nitrate reductase</fullName>
        <ecNumber evidence="1">1.9.6.1</ecNumber>
    </recommendedName>
</protein>
<comment type="function">
    <text evidence="1">Catalytic subunit of the periplasmic nitrate reductase complex NapAB. Receives electrons from NapB and catalyzes the reduction of nitrate to nitrite.</text>
</comment>
<comment type="catalytic activity">
    <reaction evidence="1">
        <text>2 Fe(II)-[cytochrome] + nitrate + 2 H(+) = 2 Fe(III)-[cytochrome] + nitrite + H2O</text>
        <dbReference type="Rhea" id="RHEA:12909"/>
        <dbReference type="Rhea" id="RHEA-COMP:11777"/>
        <dbReference type="Rhea" id="RHEA-COMP:11778"/>
        <dbReference type="ChEBI" id="CHEBI:15377"/>
        <dbReference type="ChEBI" id="CHEBI:15378"/>
        <dbReference type="ChEBI" id="CHEBI:16301"/>
        <dbReference type="ChEBI" id="CHEBI:17632"/>
        <dbReference type="ChEBI" id="CHEBI:29033"/>
        <dbReference type="ChEBI" id="CHEBI:29034"/>
        <dbReference type="EC" id="1.9.6.1"/>
    </reaction>
</comment>
<comment type="cofactor">
    <cofactor evidence="1">
        <name>[4Fe-4S] cluster</name>
        <dbReference type="ChEBI" id="CHEBI:49883"/>
    </cofactor>
    <text evidence="1">Binds 1 [4Fe-4S] cluster.</text>
</comment>
<comment type="cofactor">
    <cofactor evidence="1">
        <name>Mo-bis(molybdopterin guanine dinucleotide)</name>
        <dbReference type="ChEBI" id="CHEBI:60539"/>
    </cofactor>
    <text evidence="1">Binds 1 molybdenum-bis(molybdopterin guanine dinucleotide) (Mo-bis-MGD) cofactor per subunit.</text>
</comment>
<comment type="subunit">
    <text evidence="1">Component of the periplasmic nitrate reductase NapAB complex composed of NapA and NapB.</text>
</comment>
<comment type="subcellular location">
    <subcellularLocation>
        <location evidence="1">Periplasm</location>
    </subcellularLocation>
</comment>
<comment type="PTM">
    <text evidence="1">Predicted to be exported by the Tat system. The position of the signal peptide cleavage has not been experimentally proven.</text>
</comment>
<comment type="similarity">
    <text evidence="1">Belongs to the prokaryotic molybdopterin-containing oxidoreductase family. NasA/NapA/NarB subfamily.</text>
</comment>
<proteinExistence type="inferred from homology"/>
<gene>
    <name evidence="1" type="primary">napA</name>
    <name type="ordered locus">Spro_3486</name>
</gene>
<feature type="signal peptide" description="Tat-type signal" evidence="1">
    <location>
        <begin position="1"/>
        <end position="33"/>
    </location>
</feature>
<feature type="chain" id="PRO_5000279603" description="Periplasmic nitrate reductase" evidence="1">
    <location>
        <begin position="34"/>
        <end position="828"/>
    </location>
</feature>
<feature type="domain" description="4Fe-4S Mo/W bis-MGD-type" evidence="1">
    <location>
        <begin position="39"/>
        <end position="95"/>
    </location>
</feature>
<feature type="binding site" evidence="1">
    <location>
        <position position="46"/>
    </location>
    <ligand>
        <name>[4Fe-4S] cluster</name>
        <dbReference type="ChEBI" id="CHEBI:49883"/>
    </ligand>
</feature>
<feature type="binding site" evidence="1">
    <location>
        <position position="49"/>
    </location>
    <ligand>
        <name>[4Fe-4S] cluster</name>
        <dbReference type="ChEBI" id="CHEBI:49883"/>
    </ligand>
</feature>
<feature type="binding site" evidence="1">
    <location>
        <position position="53"/>
    </location>
    <ligand>
        <name>[4Fe-4S] cluster</name>
        <dbReference type="ChEBI" id="CHEBI:49883"/>
    </ligand>
</feature>
<feature type="binding site" evidence="1">
    <location>
        <position position="81"/>
    </location>
    <ligand>
        <name>[4Fe-4S] cluster</name>
        <dbReference type="ChEBI" id="CHEBI:49883"/>
    </ligand>
</feature>
<feature type="binding site" evidence="1">
    <location>
        <position position="83"/>
    </location>
    <ligand>
        <name>Mo-bis(molybdopterin guanine dinucleotide)</name>
        <dbReference type="ChEBI" id="CHEBI:60539"/>
    </ligand>
</feature>
<feature type="binding site" evidence="1">
    <location>
        <position position="150"/>
    </location>
    <ligand>
        <name>Mo-bis(molybdopterin guanine dinucleotide)</name>
        <dbReference type="ChEBI" id="CHEBI:60539"/>
    </ligand>
</feature>
<feature type="binding site" evidence="1">
    <location>
        <position position="175"/>
    </location>
    <ligand>
        <name>Mo-bis(molybdopterin guanine dinucleotide)</name>
        <dbReference type="ChEBI" id="CHEBI:60539"/>
    </ligand>
</feature>
<feature type="binding site" evidence="1">
    <location>
        <position position="179"/>
    </location>
    <ligand>
        <name>Mo-bis(molybdopterin guanine dinucleotide)</name>
        <dbReference type="ChEBI" id="CHEBI:60539"/>
    </ligand>
</feature>
<feature type="binding site" evidence="1">
    <location>
        <begin position="212"/>
        <end position="219"/>
    </location>
    <ligand>
        <name>Mo-bis(molybdopterin guanine dinucleotide)</name>
        <dbReference type="ChEBI" id="CHEBI:60539"/>
    </ligand>
</feature>
<feature type="binding site" evidence="1">
    <location>
        <begin position="243"/>
        <end position="247"/>
    </location>
    <ligand>
        <name>Mo-bis(molybdopterin guanine dinucleotide)</name>
        <dbReference type="ChEBI" id="CHEBI:60539"/>
    </ligand>
</feature>
<feature type="binding site" evidence="1">
    <location>
        <begin position="262"/>
        <end position="264"/>
    </location>
    <ligand>
        <name>Mo-bis(molybdopterin guanine dinucleotide)</name>
        <dbReference type="ChEBI" id="CHEBI:60539"/>
    </ligand>
</feature>
<feature type="binding site" evidence="1">
    <location>
        <position position="372"/>
    </location>
    <ligand>
        <name>Mo-bis(molybdopterin guanine dinucleotide)</name>
        <dbReference type="ChEBI" id="CHEBI:60539"/>
    </ligand>
</feature>
<feature type="binding site" evidence="1">
    <location>
        <position position="376"/>
    </location>
    <ligand>
        <name>Mo-bis(molybdopterin guanine dinucleotide)</name>
        <dbReference type="ChEBI" id="CHEBI:60539"/>
    </ligand>
</feature>
<feature type="binding site" evidence="1">
    <location>
        <position position="482"/>
    </location>
    <ligand>
        <name>Mo-bis(molybdopterin guanine dinucleotide)</name>
        <dbReference type="ChEBI" id="CHEBI:60539"/>
    </ligand>
</feature>
<feature type="binding site" evidence="1">
    <location>
        <begin position="508"/>
        <end position="509"/>
    </location>
    <ligand>
        <name>Mo-bis(molybdopterin guanine dinucleotide)</name>
        <dbReference type="ChEBI" id="CHEBI:60539"/>
    </ligand>
</feature>
<feature type="binding site" evidence="1">
    <location>
        <position position="531"/>
    </location>
    <ligand>
        <name>Mo-bis(molybdopterin guanine dinucleotide)</name>
        <dbReference type="ChEBI" id="CHEBI:60539"/>
    </ligand>
</feature>
<feature type="binding site" evidence="1">
    <location>
        <position position="558"/>
    </location>
    <ligand>
        <name>Mo-bis(molybdopterin guanine dinucleotide)</name>
        <dbReference type="ChEBI" id="CHEBI:60539"/>
    </ligand>
</feature>
<feature type="binding site" evidence="1">
    <location>
        <begin position="718"/>
        <end position="727"/>
    </location>
    <ligand>
        <name>Mo-bis(molybdopterin guanine dinucleotide)</name>
        <dbReference type="ChEBI" id="CHEBI:60539"/>
    </ligand>
</feature>
<feature type="binding site" evidence="1">
    <location>
        <position position="794"/>
    </location>
    <ligand>
        <name>substrate</name>
    </ligand>
</feature>
<feature type="binding site" evidence="1">
    <location>
        <position position="802"/>
    </location>
    <ligand>
        <name>Mo-bis(molybdopterin guanine dinucleotide)</name>
        <dbReference type="ChEBI" id="CHEBI:60539"/>
    </ligand>
</feature>
<feature type="binding site" evidence="1">
    <location>
        <position position="819"/>
    </location>
    <ligand>
        <name>Mo-bis(molybdopterin guanine dinucleotide)</name>
        <dbReference type="ChEBI" id="CHEBI:60539"/>
    </ligand>
</feature>
<dbReference type="EC" id="1.9.6.1" evidence="1"/>
<dbReference type="EMBL" id="CP000826">
    <property type="protein sequence ID" value="ABV42584.1"/>
    <property type="molecule type" value="Genomic_DNA"/>
</dbReference>
<dbReference type="SMR" id="A8GHJ4"/>
<dbReference type="STRING" id="399741.Spro_3486"/>
<dbReference type="KEGG" id="spe:Spro_3486"/>
<dbReference type="eggNOG" id="COG0243">
    <property type="taxonomic scope" value="Bacteria"/>
</dbReference>
<dbReference type="HOGENOM" id="CLU_000422_13_4_6"/>
<dbReference type="OrthoDB" id="9816402at2"/>
<dbReference type="GO" id="GO:0016020">
    <property type="term" value="C:membrane"/>
    <property type="evidence" value="ECO:0007669"/>
    <property type="project" value="TreeGrafter"/>
</dbReference>
<dbReference type="GO" id="GO:0009325">
    <property type="term" value="C:nitrate reductase complex"/>
    <property type="evidence" value="ECO:0007669"/>
    <property type="project" value="TreeGrafter"/>
</dbReference>
<dbReference type="GO" id="GO:0042597">
    <property type="term" value="C:periplasmic space"/>
    <property type="evidence" value="ECO:0007669"/>
    <property type="project" value="UniProtKB-SubCell"/>
</dbReference>
<dbReference type="GO" id="GO:0051539">
    <property type="term" value="F:4 iron, 4 sulfur cluster binding"/>
    <property type="evidence" value="ECO:0007669"/>
    <property type="project" value="UniProtKB-KW"/>
</dbReference>
<dbReference type="GO" id="GO:0009055">
    <property type="term" value="F:electron transfer activity"/>
    <property type="evidence" value="ECO:0007669"/>
    <property type="project" value="UniProtKB-UniRule"/>
</dbReference>
<dbReference type="GO" id="GO:0005506">
    <property type="term" value="F:iron ion binding"/>
    <property type="evidence" value="ECO:0007669"/>
    <property type="project" value="UniProtKB-UniRule"/>
</dbReference>
<dbReference type="GO" id="GO:0030151">
    <property type="term" value="F:molybdenum ion binding"/>
    <property type="evidence" value="ECO:0007669"/>
    <property type="project" value="InterPro"/>
</dbReference>
<dbReference type="GO" id="GO:0043546">
    <property type="term" value="F:molybdopterin cofactor binding"/>
    <property type="evidence" value="ECO:0007669"/>
    <property type="project" value="InterPro"/>
</dbReference>
<dbReference type="GO" id="GO:0050140">
    <property type="term" value="F:nitrate reductase (cytochrome) activity"/>
    <property type="evidence" value="ECO:0007669"/>
    <property type="project" value="UniProtKB-EC"/>
</dbReference>
<dbReference type="GO" id="GO:0045333">
    <property type="term" value="P:cellular respiration"/>
    <property type="evidence" value="ECO:0007669"/>
    <property type="project" value="UniProtKB-ARBA"/>
</dbReference>
<dbReference type="GO" id="GO:0006777">
    <property type="term" value="P:Mo-molybdopterin cofactor biosynthetic process"/>
    <property type="evidence" value="ECO:0007669"/>
    <property type="project" value="UniProtKB-UniRule"/>
</dbReference>
<dbReference type="GO" id="GO:0042128">
    <property type="term" value="P:nitrate assimilation"/>
    <property type="evidence" value="ECO:0007669"/>
    <property type="project" value="UniProtKB-UniRule"/>
</dbReference>
<dbReference type="CDD" id="cd02791">
    <property type="entry name" value="MopB_CT_Nitrate-R-NapA-like"/>
    <property type="match status" value="1"/>
</dbReference>
<dbReference type="CDD" id="cd02754">
    <property type="entry name" value="MopB_Nitrate-R-NapA-like"/>
    <property type="match status" value="1"/>
</dbReference>
<dbReference type="FunFam" id="2.40.40.20:FF:000005">
    <property type="entry name" value="Periplasmic nitrate reductase"/>
    <property type="match status" value="1"/>
</dbReference>
<dbReference type="Gene3D" id="2.40.40.20">
    <property type="match status" value="1"/>
</dbReference>
<dbReference type="Gene3D" id="3.30.200.210">
    <property type="match status" value="1"/>
</dbReference>
<dbReference type="Gene3D" id="3.40.50.740">
    <property type="match status" value="1"/>
</dbReference>
<dbReference type="Gene3D" id="3.40.228.10">
    <property type="entry name" value="Dimethylsulfoxide Reductase, domain 2"/>
    <property type="match status" value="1"/>
</dbReference>
<dbReference type="HAMAP" id="MF_01630">
    <property type="entry name" value="Nitrate_reduct_NapA"/>
    <property type="match status" value="1"/>
</dbReference>
<dbReference type="InterPro" id="IPR009010">
    <property type="entry name" value="Asp_de-COase-like_dom_sf"/>
</dbReference>
<dbReference type="InterPro" id="IPR041957">
    <property type="entry name" value="CT_Nitrate-R-NapA-like"/>
</dbReference>
<dbReference type="InterPro" id="IPR006657">
    <property type="entry name" value="MoPterin_dinucl-bd_dom"/>
</dbReference>
<dbReference type="InterPro" id="IPR006656">
    <property type="entry name" value="Mopterin_OxRdtase"/>
</dbReference>
<dbReference type="InterPro" id="IPR006963">
    <property type="entry name" value="Mopterin_OxRdtase_4Fe-4S_dom"/>
</dbReference>
<dbReference type="InterPro" id="IPR027467">
    <property type="entry name" value="MopterinOxRdtase_cofactor_BS"/>
</dbReference>
<dbReference type="InterPro" id="IPR010051">
    <property type="entry name" value="Periplasm_NO3_reductase_lsu"/>
</dbReference>
<dbReference type="InterPro" id="IPR050123">
    <property type="entry name" value="Prok_molybdopt-oxidoreductase"/>
</dbReference>
<dbReference type="InterPro" id="IPR006311">
    <property type="entry name" value="TAT_signal"/>
</dbReference>
<dbReference type="InterPro" id="IPR019546">
    <property type="entry name" value="TAT_signal_bac_arc"/>
</dbReference>
<dbReference type="NCBIfam" id="TIGR01706">
    <property type="entry name" value="NAPA"/>
    <property type="match status" value="1"/>
</dbReference>
<dbReference type="NCBIfam" id="NF010055">
    <property type="entry name" value="PRK13532.1"/>
    <property type="match status" value="1"/>
</dbReference>
<dbReference type="NCBIfam" id="TIGR01409">
    <property type="entry name" value="TAT_signal_seq"/>
    <property type="match status" value="1"/>
</dbReference>
<dbReference type="PANTHER" id="PTHR43105:SF11">
    <property type="entry name" value="PERIPLASMIC NITRATE REDUCTASE"/>
    <property type="match status" value="1"/>
</dbReference>
<dbReference type="PANTHER" id="PTHR43105">
    <property type="entry name" value="RESPIRATORY NITRATE REDUCTASE"/>
    <property type="match status" value="1"/>
</dbReference>
<dbReference type="Pfam" id="PF04879">
    <property type="entry name" value="Molybdop_Fe4S4"/>
    <property type="match status" value="1"/>
</dbReference>
<dbReference type="Pfam" id="PF00384">
    <property type="entry name" value="Molybdopterin"/>
    <property type="match status" value="1"/>
</dbReference>
<dbReference type="Pfam" id="PF01568">
    <property type="entry name" value="Molydop_binding"/>
    <property type="match status" value="1"/>
</dbReference>
<dbReference type="Pfam" id="PF10518">
    <property type="entry name" value="TAT_signal"/>
    <property type="match status" value="1"/>
</dbReference>
<dbReference type="SMART" id="SM00926">
    <property type="entry name" value="Molybdop_Fe4S4"/>
    <property type="match status" value="1"/>
</dbReference>
<dbReference type="SUPFAM" id="SSF50692">
    <property type="entry name" value="ADC-like"/>
    <property type="match status" value="1"/>
</dbReference>
<dbReference type="SUPFAM" id="SSF53706">
    <property type="entry name" value="Formate dehydrogenase/DMSO reductase, domains 1-3"/>
    <property type="match status" value="1"/>
</dbReference>
<dbReference type="PROSITE" id="PS51669">
    <property type="entry name" value="4FE4S_MOW_BIS_MGD"/>
    <property type="match status" value="1"/>
</dbReference>
<dbReference type="PROSITE" id="PS00551">
    <property type="entry name" value="MOLYBDOPTERIN_PROK_1"/>
    <property type="match status" value="1"/>
</dbReference>
<dbReference type="PROSITE" id="PS51318">
    <property type="entry name" value="TAT"/>
    <property type="match status" value="1"/>
</dbReference>
<accession>A8GHJ4</accession>
<keyword id="KW-0004">4Fe-4S</keyword>
<keyword id="KW-0249">Electron transport</keyword>
<keyword id="KW-0408">Iron</keyword>
<keyword id="KW-0411">Iron-sulfur</keyword>
<keyword id="KW-0479">Metal-binding</keyword>
<keyword id="KW-0500">Molybdenum</keyword>
<keyword id="KW-0534">Nitrate assimilation</keyword>
<keyword id="KW-0560">Oxidoreductase</keyword>
<keyword id="KW-0574">Periplasm</keyword>
<keyword id="KW-0732">Signal</keyword>
<keyword id="KW-0813">Transport</keyword>
<organism>
    <name type="scientific">Serratia proteamaculans (strain 568)</name>
    <dbReference type="NCBI Taxonomy" id="399741"/>
    <lineage>
        <taxon>Bacteria</taxon>
        <taxon>Pseudomonadati</taxon>
        <taxon>Pseudomonadota</taxon>
        <taxon>Gammaproteobacteria</taxon>
        <taxon>Enterobacterales</taxon>
        <taxon>Yersiniaceae</taxon>
        <taxon>Serratia</taxon>
    </lineage>
</organism>
<reference key="1">
    <citation type="submission" date="2007-09" db="EMBL/GenBank/DDBJ databases">
        <title>Complete sequence of chromosome of Serratia proteamaculans 568.</title>
        <authorList>
            <consortium name="US DOE Joint Genome Institute"/>
            <person name="Copeland A."/>
            <person name="Lucas S."/>
            <person name="Lapidus A."/>
            <person name="Barry K."/>
            <person name="Glavina del Rio T."/>
            <person name="Dalin E."/>
            <person name="Tice H."/>
            <person name="Pitluck S."/>
            <person name="Chain P."/>
            <person name="Malfatti S."/>
            <person name="Shin M."/>
            <person name="Vergez L."/>
            <person name="Schmutz J."/>
            <person name="Larimer F."/>
            <person name="Land M."/>
            <person name="Hauser L."/>
            <person name="Kyrpides N."/>
            <person name="Kim E."/>
            <person name="Taghavi S."/>
            <person name="Newman L."/>
            <person name="Vangronsveld J."/>
            <person name="van der Lelie D."/>
            <person name="Richardson P."/>
        </authorList>
    </citation>
    <scope>NUCLEOTIDE SEQUENCE [LARGE SCALE GENOMIC DNA]</scope>
    <source>
        <strain>568</strain>
    </source>
</reference>
<name>NAPA_SERP5</name>
<evidence type="ECO:0000255" key="1">
    <source>
        <dbReference type="HAMAP-Rule" id="MF_01630"/>
    </source>
</evidence>